<proteinExistence type="inferred from homology"/>
<accession>Q47WU8</accession>
<organism>
    <name type="scientific">Colwellia psychrerythraea (strain 34H / ATCC BAA-681)</name>
    <name type="common">Vibrio psychroerythus</name>
    <dbReference type="NCBI Taxonomy" id="167879"/>
    <lineage>
        <taxon>Bacteria</taxon>
        <taxon>Pseudomonadati</taxon>
        <taxon>Pseudomonadota</taxon>
        <taxon>Gammaproteobacteria</taxon>
        <taxon>Alteromonadales</taxon>
        <taxon>Colwelliaceae</taxon>
        <taxon>Colwellia</taxon>
    </lineage>
</organism>
<evidence type="ECO:0000255" key="1">
    <source>
        <dbReference type="HAMAP-Rule" id="MF_00385"/>
    </source>
</evidence>
<evidence type="ECO:0000305" key="2"/>
<reference key="1">
    <citation type="journal article" date="2005" name="Proc. Natl. Acad. Sci. U.S.A.">
        <title>The psychrophilic lifestyle as revealed by the genome sequence of Colwellia psychrerythraea 34H through genomic and proteomic analyses.</title>
        <authorList>
            <person name="Methe B.A."/>
            <person name="Nelson K.E."/>
            <person name="Deming J.W."/>
            <person name="Momen B."/>
            <person name="Melamud E."/>
            <person name="Zhang X."/>
            <person name="Moult J."/>
            <person name="Madupu R."/>
            <person name="Nelson W.C."/>
            <person name="Dodson R.J."/>
            <person name="Brinkac L.M."/>
            <person name="Daugherty S.C."/>
            <person name="Durkin A.S."/>
            <person name="DeBoy R.T."/>
            <person name="Kolonay J.F."/>
            <person name="Sullivan S.A."/>
            <person name="Zhou L."/>
            <person name="Davidsen T.M."/>
            <person name="Wu M."/>
            <person name="Huston A.L."/>
            <person name="Lewis M."/>
            <person name="Weaver B."/>
            <person name="Weidman J.F."/>
            <person name="Khouri H."/>
            <person name="Utterback T.R."/>
            <person name="Feldblyum T.V."/>
            <person name="Fraser C.M."/>
        </authorList>
    </citation>
    <scope>NUCLEOTIDE SEQUENCE [LARGE SCALE GENOMIC DNA]</scope>
    <source>
        <strain>34H / ATCC BAA-681</strain>
    </source>
</reference>
<comment type="similarity">
    <text evidence="1">Belongs to the bacterial ribosomal protein bS16 family.</text>
</comment>
<keyword id="KW-0687">Ribonucleoprotein</keyword>
<keyword id="KW-0689">Ribosomal protein</keyword>
<name>RS16_COLP3</name>
<sequence length="81" mass="8957">MVTIRLARGGAKKRPFYQVVVADSRNSRDGRFIEKVGFFNPTAQGQAEKLRLDLDRITHWVGQGATVSDRVAKLVKDATAA</sequence>
<dbReference type="EMBL" id="CP000083">
    <property type="protein sequence ID" value="AAZ25592.1"/>
    <property type="molecule type" value="Genomic_DNA"/>
</dbReference>
<dbReference type="RefSeq" id="WP_011044805.1">
    <property type="nucleotide sequence ID" value="NC_003910.7"/>
</dbReference>
<dbReference type="SMR" id="Q47WU8"/>
<dbReference type="STRING" id="167879.CPS_4069"/>
<dbReference type="KEGG" id="cps:CPS_4069"/>
<dbReference type="eggNOG" id="COG0228">
    <property type="taxonomic scope" value="Bacteria"/>
</dbReference>
<dbReference type="HOGENOM" id="CLU_100590_5_1_6"/>
<dbReference type="Proteomes" id="UP000000547">
    <property type="component" value="Chromosome"/>
</dbReference>
<dbReference type="GO" id="GO:0005737">
    <property type="term" value="C:cytoplasm"/>
    <property type="evidence" value="ECO:0007669"/>
    <property type="project" value="UniProtKB-ARBA"/>
</dbReference>
<dbReference type="GO" id="GO:0015935">
    <property type="term" value="C:small ribosomal subunit"/>
    <property type="evidence" value="ECO:0007669"/>
    <property type="project" value="TreeGrafter"/>
</dbReference>
<dbReference type="GO" id="GO:0003735">
    <property type="term" value="F:structural constituent of ribosome"/>
    <property type="evidence" value="ECO:0007669"/>
    <property type="project" value="InterPro"/>
</dbReference>
<dbReference type="GO" id="GO:0006412">
    <property type="term" value="P:translation"/>
    <property type="evidence" value="ECO:0007669"/>
    <property type="project" value="UniProtKB-UniRule"/>
</dbReference>
<dbReference type="FunFam" id="3.30.1320.10:FF:000001">
    <property type="entry name" value="30S ribosomal protein S16"/>
    <property type="match status" value="1"/>
</dbReference>
<dbReference type="Gene3D" id="3.30.1320.10">
    <property type="match status" value="1"/>
</dbReference>
<dbReference type="HAMAP" id="MF_00385">
    <property type="entry name" value="Ribosomal_bS16"/>
    <property type="match status" value="1"/>
</dbReference>
<dbReference type="InterPro" id="IPR000307">
    <property type="entry name" value="Ribosomal_bS16"/>
</dbReference>
<dbReference type="InterPro" id="IPR020592">
    <property type="entry name" value="Ribosomal_bS16_CS"/>
</dbReference>
<dbReference type="InterPro" id="IPR023803">
    <property type="entry name" value="Ribosomal_bS16_dom_sf"/>
</dbReference>
<dbReference type="NCBIfam" id="TIGR00002">
    <property type="entry name" value="S16"/>
    <property type="match status" value="1"/>
</dbReference>
<dbReference type="PANTHER" id="PTHR12919">
    <property type="entry name" value="30S RIBOSOMAL PROTEIN S16"/>
    <property type="match status" value="1"/>
</dbReference>
<dbReference type="PANTHER" id="PTHR12919:SF20">
    <property type="entry name" value="SMALL RIBOSOMAL SUBUNIT PROTEIN BS16M"/>
    <property type="match status" value="1"/>
</dbReference>
<dbReference type="Pfam" id="PF00886">
    <property type="entry name" value="Ribosomal_S16"/>
    <property type="match status" value="1"/>
</dbReference>
<dbReference type="SUPFAM" id="SSF54565">
    <property type="entry name" value="Ribosomal protein S16"/>
    <property type="match status" value="1"/>
</dbReference>
<dbReference type="PROSITE" id="PS00732">
    <property type="entry name" value="RIBOSOMAL_S16"/>
    <property type="match status" value="1"/>
</dbReference>
<feature type="chain" id="PRO_0000243796" description="Small ribosomal subunit protein bS16">
    <location>
        <begin position="1"/>
        <end position="81"/>
    </location>
</feature>
<protein>
    <recommendedName>
        <fullName evidence="1">Small ribosomal subunit protein bS16</fullName>
    </recommendedName>
    <alternativeName>
        <fullName evidence="2">30S ribosomal protein S16</fullName>
    </alternativeName>
</protein>
<gene>
    <name evidence="1" type="primary">rpsP</name>
    <name type="ordered locus">CPS_4069</name>
</gene>